<name>STU1_PHANO</name>
<comment type="function">
    <text evidence="1">Microtubule binding protein that promotes the stabilization of dynamic microtubules. Required for mitotic spindle formation (By similarity).</text>
</comment>
<comment type="subunit">
    <text evidence="1">Interacts with microtubules.</text>
</comment>
<comment type="subcellular location">
    <subcellularLocation>
        <location evidence="1">Cytoplasm</location>
        <location evidence="1">Cytoskeleton</location>
    </subcellularLocation>
    <subcellularLocation>
        <location evidence="1">Nucleus</location>
    </subcellularLocation>
    <subcellularLocation>
        <location evidence="1">Cytoplasm</location>
        <location evidence="1">Cytoskeleton</location>
        <location evidence="1">Spindle</location>
    </subcellularLocation>
</comment>
<comment type="similarity">
    <text evidence="3">Belongs to the CLASP family.</text>
</comment>
<comment type="sequence caution" evidence="3">
    <conflict type="erroneous gene model prediction">
        <sequence resource="EMBL-CDS" id="EAT87030"/>
    </conflict>
</comment>
<organism>
    <name type="scientific">Phaeosphaeria nodorum (strain SN15 / ATCC MYA-4574 / FGSC 10173)</name>
    <name type="common">Glume blotch fungus</name>
    <name type="synonym">Parastagonospora nodorum</name>
    <dbReference type="NCBI Taxonomy" id="321614"/>
    <lineage>
        <taxon>Eukaryota</taxon>
        <taxon>Fungi</taxon>
        <taxon>Dikarya</taxon>
        <taxon>Ascomycota</taxon>
        <taxon>Pezizomycotina</taxon>
        <taxon>Dothideomycetes</taxon>
        <taxon>Pleosporomycetidae</taxon>
        <taxon>Pleosporales</taxon>
        <taxon>Pleosporineae</taxon>
        <taxon>Phaeosphaeriaceae</taxon>
        <taxon>Parastagonospora</taxon>
    </lineage>
</organism>
<proteinExistence type="inferred from homology"/>
<keyword id="KW-0131">Cell cycle</keyword>
<keyword id="KW-0132">Cell division</keyword>
<keyword id="KW-0963">Cytoplasm</keyword>
<keyword id="KW-0206">Cytoskeleton</keyword>
<keyword id="KW-0493">Microtubule</keyword>
<keyword id="KW-0498">Mitosis</keyword>
<keyword id="KW-0539">Nucleus</keyword>
<keyword id="KW-0677">Repeat</keyword>
<protein>
    <recommendedName>
        <fullName>Protein STU1</fullName>
    </recommendedName>
</protein>
<accession>Q0UQJ8</accession>
<sequence>MPDMLEQTNALLAALKKPSTNVDQRLQLFSNVKSNIKHNRVPEECQAPIFECIRIAISATTSATLVSTGFSTLSHFIKRLQLQRETAVITSQSSKLCALLLEKLGDARESHRSASLQILADLHPLCPLEVETLIHNAMKGTNARAKDTSMTWVVKMNQTENLPFRAYSAQMIANLEDADAGVRDTAKHAVVDLFTSAPEHAKANLKKQLVSTNVRKAIATYITAHLDGAATGGAHEEMPPPPPAVRERPLPTQRAQTLQPDHGIADALAAEQPPPTEAVTMDPIHIYTQRELEDIFRDMAPPFEGRESEGNWLARDKNTTKLRRILMGNAPAEFPGAFVAGIKSLLEGILKVANTLRTTMSTNGCQLVQELAKTLRHAIDPWVEILLQCFIKMCAATKNIAAQNGNVTVEAIISNVSYNNRILQHVSFAATNALRASWVKTLIRKHKAHVEHSGGLDTLEKIIRKGVTDANPKVREAYRSTYWTFALVWPQRAEAMFETLEKREKTALEKDPNNPNASLASSQSSAVSSFSKSVGAGAARNALKEKIAEQRRAKMAASKVPERPMSAAATYSPVKSASTKSLSARTASTASTASNGPARPPSAMSGESTKSALKNSSGTGSLMSGTVRRPIRRPELNRPATADPYAVRRAGNGKTTPSMTPEKTPAVTTTKKSVAPKSSVRPRAQTQNSPNVSPIRSRSRLGQSTTVQKTASASSRQASPAPSASKDEDLELTIVKPFVRSQSHHDPGTIPFRQRNGLDKSAVFDNETVLSGDEDNFTMVIPNLARPTAQSIHHTPPKTHSPSHLSAPSPRASMLRSPKSMGDINGFGFRSSTRSPRVRSPDRPSTRGTDAQEGVQVFEDPFVGDEPAAVEHEVEKPVLGELPINEKNIERRPSNESISSDTVMGNASEDRPRGHHKTTSTGSVLYSESNDTNNAEVLKNRQLLASGIKKIESRTVESHMFRRMQDMIRSNHEIWGANDENFGCLLLACLDFLEVPTEELKTTPIKVANLKVQALATIRAMLSLYRKETAKYFSRVLCTVLQTKAQYENTSHIAIDLETTAEEIVRYGQTSDCLNAVLALIEDLPSSTPTSSPSSKSSLTSLPGAGQTRTATMALSTLAALIQISGAKNITLSPDQTSRLGKLAVRCMDDQDADVRKSNIEFCIALHERIAAPAGEQENDGFWRAVAGAREQHLNLLTYYLAKRRAA</sequence>
<feature type="chain" id="PRO_0000272293" description="Protein STU1">
    <location>
        <begin position="1"/>
        <end position="1207"/>
    </location>
</feature>
<feature type="region of interest" description="Disordered" evidence="2">
    <location>
        <begin position="504"/>
        <end position="525"/>
    </location>
</feature>
<feature type="region of interest" description="Disordered" evidence="2">
    <location>
        <begin position="549"/>
        <end position="730"/>
    </location>
</feature>
<feature type="region of interest" description="Disordered" evidence="2">
    <location>
        <begin position="789"/>
        <end position="856"/>
    </location>
</feature>
<feature type="region of interest" description="Disordered" evidence="2">
    <location>
        <begin position="869"/>
        <end position="928"/>
    </location>
</feature>
<feature type="region of interest" description="Disordered" evidence="2">
    <location>
        <begin position="1086"/>
        <end position="1105"/>
    </location>
</feature>
<feature type="compositionally biased region" description="Low complexity" evidence="2">
    <location>
        <begin position="576"/>
        <end position="594"/>
    </location>
</feature>
<feature type="compositionally biased region" description="Polar residues" evidence="2">
    <location>
        <begin position="605"/>
        <end position="624"/>
    </location>
</feature>
<feature type="compositionally biased region" description="Polar residues" evidence="2">
    <location>
        <begin position="653"/>
        <end position="672"/>
    </location>
</feature>
<feature type="compositionally biased region" description="Polar residues" evidence="2">
    <location>
        <begin position="684"/>
        <end position="710"/>
    </location>
</feature>
<feature type="compositionally biased region" description="Low complexity" evidence="2">
    <location>
        <begin position="711"/>
        <end position="724"/>
    </location>
</feature>
<feature type="compositionally biased region" description="Low complexity" evidence="2">
    <location>
        <begin position="791"/>
        <end position="806"/>
    </location>
</feature>
<feature type="compositionally biased region" description="Basic and acidic residues" evidence="2">
    <location>
        <begin position="869"/>
        <end position="878"/>
    </location>
</feature>
<feature type="compositionally biased region" description="Polar residues" evidence="2">
    <location>
        <begin position="895"/>
        <end position="905"/>
    </location>
</feature>
<feature type="compositionally biased region" description="Polar residues" evidence="2">
    <location>
        <begin position="919"/>
        <end position="928"/>
    </location>
</feature>
<reference key="1">
    <citation type="journal article" date="2007" name="Plant Cell">
        <title>Dothideomycete-plant interactions illuminated by genome sequencing and EST analysis of the wheat pathogen Stagonospora nodorum.</title>
        <authorList>
            <person name="Hane J.K."/>
            <person name="Lowe R.G.T."/>
            <person name="Solomon P.S."/>
            <person name="Tan K.-C."/>
            <person name="Schoch C.L."/>
            <person name="Spatafora J.W."/>
            <person name="Crous P.W."/>
            <person name="Kodira C.D."/>
            <person name="Birren B.W."/>
            <person name="Galagan J.E."/>
            <person name="Torriani S.F.F."/>
            <person name="McDonald B.A."/>
            <person name="Oliver R.P."/>
        </authorList>
    </citation>
    <scope>NUCLEOTIDE SEQUENCE [LARGE SCALE GENOMIC DNA]</scope>
    <source>
        <strain>SN15 / ATCC MYA-4574 / FGSC 10173</strain>
    </source>
</reference>
<gene>
    <name type="primary">STU1</name>
    <name type="ORF">SNOG_05966</name>
</gene>
<dbReference type="EMBL" id="CH445332">
    <property type="protein sequence ID" value="EAT87030.2"/>
    <property type="status" value="ALT_SEQ"/>
    <property type="molecule type" value="Genomic_DNA"/>
</dbReference>
<dbReference type="RefSeq" id="XP_001796355.1">
    <property type="nucleotide sequence ID" value="XM_001796303.1"/>
</dbReference>
<dbReference type="STRING" id="321614.Q0UQJ8"/>
<dbReference type="GeneID" id="5973232"/>
<dbReference type="KEGG" id="pno:SNOG_05966"/>
<dbReference type="VEuPathDB" id="FungiDB:JI435_059660"/>
<dbReference type="eggNOG" id="ENOG502QT5T">
    <property type="taxonomic scope" value="Eukaryota"/>
</dbReference>
<dbReference type="InParanoid" id="Q0UQJ8"/>
<dbReference type="OMA" id="GNAPHDF"/>
<dbReference type="Proteomes" id="UP000001055">
    <property type="component" value="Unassembled WGS sequence"/>
</dbReference>
<dbReference type="GO" id="GO:0005881">
    <property type="term" value="C:cytoplasmic microtubule"/>
    <property type="evidence" value="ECO:0000318"/>
    <property type="project" value="GO_Central"/>
</dbReference>
<dbReference type="GO" id="GO:0005815">
    <property type="term" value="C:microtubule organizing center"/>
    <property type="evidence" value="ECO:0000318"/>
    <property type="project" value="GO_Central"/>
</dbReference>
<dbReference type="GO" id="GO:0072686">
    <property type="term" value="C:mitotic spindle"/>
    <property type="evidence" value="ECO:0000318"/>
    <property type="project" value="GO_Central"/>
</dbReference>
<dbReference type="GO" id="GO:1990023">
    <property type="term" value="C:mitotic spindle midzone"/>
    <property type="evidence" value="ECO:0000318"/>
    <property type="project" value="GO_Central"/>
</dbReference>
<dbReference type="GO" id="GO:0005634">
    <property type="term" value="C:nucleus"/>
    <property type="evidence" value="ECO:0007669"/>
    <property type="project" value="UniProtKB-SubCell"/>
</dbReference>
<dbReference type="GO" id="GO:0005876">
    <property type="term" value="C:spindle microtubule"/>
    <property type="evidence" value="ECO:0000318"/>
    <property type="project" value="GO_Central"/>
</dbReference>
<dbReference type="GO" id="GO:0008017">
    <property type="term" value="F:microtubule binding"/>
    <property type="evidence" value="ECO:0000318"/>
    <property type="project" value="GO_Central"/>
</dbReference>
<dbReference type="GO" id="GO:0060172">
    <property type="term" value="P:astral microtubule depolymerization"/>
    <property type="evidence" value="ECO:0000318"/>
    <property type="project" value="GO_Central"/>
</dbReference>
<dbReference type="GO" id="GO:0051301">
    <property type="term" value="P:cell division"/>
    <property type="evidence" value="ECO:0007669"/>
    <property type="project" value="UniProtKB-KW"/>
</dbReference>
<dbReference type="GO" id="GO:0090307">
    <property type="term" value="P:mitotic spindle assembly"/>
    <property type="evidence" value="ECO:0000318"/>
    <property type="project" value="GO_Central"/>
</dbReference>
<dbReference type="Gene3D" id="1.25.10.10">
    <property type="entry name" value="Leucine-rich Repeat Variant"/>
    <property type="match status" value="3"/>
</dbReference>
<dbReference type="InterPro" id="IPR011989">
    <property type="entry name" value="ARM-like"/>
</dbReference>
<dbReference type="InterPro" id="IPR016024">
    <property type="entry name" value="ARM-type_fold"/>
</dbReference>
<dbReference type="InterPro" id="IPR024395">
    <property type="entry name" value="CLASP_N_dom"/>
</dbReference>
<dbReference type="InterPro" id="IPR034085">
    <property type="entry name" value="TOG"/>
</dbReference>
<dbReference type="PANTHER" id="PTHR21567">
    <property type="entry name" value="CLASP"/>
    <property type="match status" value="1"/>
</dbReference>
<dbReference type="PANTHER" id="PTHR21567:SF9">
    <property type="entry name" value="CLIP-ASSOCIATING PROTEIN"/>
    <property type="match status" value="1"/>
</dbReference>
<dbReference type="Pfam" id="PF12348">
    <property type="entry name" value="CLASP_N"/>
    <property type="match status" value="2"/>
</dbReference>
<dbReference type="SMART" id="SM01349">
    <property type="entry name" value="TOG"/>
    <property type="match status" value="1"/>
</dbReference>
<dbReference type="SUPFAM" id="SSF48371">
    <property type="entry name" value="ARM repeat"/>
    <property type="match status" value="1"/>
</dbReference>
<evidence type="ECO:0000250" key="1"/>
<evidence type="ECO:0000256" key="2">
    <source>
        <dbReference type="SAM" id="MobiDB-lite"/>
    </source>
</evidence>
<evidence type="ECO:0000305" key="3"/>